<gene>
    <name evidence="1" type="primary">rplK</name>
    <name type="ordered locus">mma_3424</name>
</gene>
<protein>
    <recommendedName>
        <fullName evidence="1">Large ribosomal subunit protein uL11</fullName>
    </recommendedName>
    <alternativeName>
        <fullName evidence="2">50S ribosomal protein L11</fullName>
    </alternativeName>
</protein>
<feature type="chain" id="PRO_1000046194" description="Large ribosomal subunit protein uL11">
    <location>
        <begin position="1"/>
        <end position="143"/>
    </location>
</feature>
<reference key="1">
    <citation type="journal article" date="2007" name="PLoS Genet.">
        <title>Genome analysis of Minibacterium massiliensis highlights the convergent evolution of water-living bacteria.</title>
        <authorList>
            <person name="Audic S."/>
            <person name="Robert C."/>
            <person name="Campagna B."/>
            <person name="Parinello H."/>
            <person name="Claverie J.-M."/>
            <person name="Raoult D."/>
            <person name="Drancourt M."/>
        </authorList>
    </citation>
    <scope>NUCLEOTIDE SEQUENCE [LARGE SCALE GENOMIC DNA]</scope>
    <source>
        <strain>Marseille</strain>
    </source>
</reference>
<dbReference type="EMBL" id="CP000269">
    <property type="protein sequence ID" value="ABR88806.1"/>
    <property type="molecule type" value="Genomic_DNA"/>
</dbReference>
<dbReference type="RefSeq" id="WP_012081261.1">
    <property type="nucleotide sequence ID" value="NC_009659.1"/>
</dbReference>
<dbReference type="SMR" id="A6T3L7"/>
<dbReference type="STRING" id="375286.mma_3424"/>
<dbReference type="KEGG" id="mms:mma_3424"/>
<dbReference type="eggNOG" id="COG0080">
    <property type="taxonomic scope" value="Bacteria"/>
</dbReference>
<dbReference type="HOGENOM" id="CLU_074237_2_0_4"/>
<dbReference type="OrthoDB" id="9802408at2"/>
<dbReference type="Proteomes" id="UP000006388">
    <property type="component" value="Chromosome"/>
</dbReference>
<dbReference type="GO" id="GO:0022625">
    <property type="term" value="C:cytosolic large ribosomal subunit"/>
    <property type="evidence" value="ECO:0007669"/>
    <property type="project" value="TreeGrafter"/>
</dbReference>
<dbReference type="GO" id="GO:0070180">
    <property type="term" value="F:large ribosomal subunit rRNA binding"/>
    <property type="evidence" value="ECO:0007669"/>
    <property type="project" value="UniProtKB-UniRule"/>
</dbReference>
<dbReference type="GO" id="GO:0003735">
    <property type="term" value="F:structural constituent of ribosome"/>
    <property type="evidence" value="ECO:0007669"/>
    <property type="project" value="InterPro"/>
</dbReference>
<dbReference type="GO" id="GO:0006412">
    <property type="term" value="P:translation"/>
    <property type="evidence" value="ECO:0007669"/>
    <property type="project" value="UniProtKB-UniRule"/>
</dbReference>
<dbReference type="CDD" id="cd00349">
    <property type="entry name" value="Ribosomal_L11"/>
    <property type="match status" value="1"/>
</dbReference>
<dbReference type="FunFam" id="1.10.10.250:FF:000001">
    <property type="entry name" value="50S ribosomal protein L11"/>
    <property type="match status" value="1"/>
</dbReference>
<dbReference type="FunFam" id="3.30.1550.10:FF:000001">
    <property type="entry name" value="50S ribosomal protein L11"/>
    <property type="match status" value="1"/>
</dbReference>
<dbReference type="Gene3D" id="1.10.10.250">
    <property type="entry name" value="Ribosomal protein L11, C-terminal domain"/>
    <property type="match status" value="1"/>
</dbReference>
<dbReference type="Gene3D" id="3.30.1550.10">
    <property type="entry name" value="Ribosomal protein L11/L12, N-terminal domain"/>
    <property type="match status" value="1"/>
</dbReference>
<dbReference type="HAMAP" id="MF_00736">
    <property type="entry name" value="Ribosomal_uL11"/>
    <property type="match status" value="1"/>
</dbReference>
<dbReference type="InterPro" id="IPR000911">
    <property type="entry name" value="Ribosomal_uL11"/>
</dbReference>
<dbReference type="InterPro" id="IPR006519">
    <property type="entry name" value="Ribosomal_uL11_bac-typ"/>
</dbReference>
<dbReference type="InterPro" id="IPR020783">
    <property type="entry name" value="Ribosomal_uL11_C"/>
</dbReference>
<dbReference type="InterPro" id="IPR036769">
    <property type="entry name" value="Ribosomal_uL11_C_sf"/>
</dbReference>
<dbReference type="InterPro" id="IPR020785">
    <property type="entry name" value="Ribosomal_uL11_CS"/>
</dbReference>
<dbReference type="InterPro" id="IPR020784">
    <property type="entry name" value="Ribosomal_uL11_N"/>
</dbReference>
<dbReference type="InterPro" id="IPR036796">
    <property type="entry name" value="Ribosomal_uL11_N_sf"/>
</dbReference>
<dbReference type="NCBIfam" id="TIGR01632">
    <property type="entry name" value="L11_bact"/>
    <property type="match status" value="1"/>
</dbReference>
<dbReference type="PANTHER" id="PTHR11661">
    <property type="entry name" value="60S RIBOSOMAL PROTEIN L12"/>
    <property type="match status" value="1"/>
</dbReference>
<dbReference type="PANTHER" id="PTHR11661:SF1">
    <property type="entry name" value="LARGE RIBOSOMAL SUBUNIT PROTEIN UL11M"/>
    <property type="match status" value="1"/>
</dbReference>
<dbReference type="Pfam" id="PF00298">
    <property type="entry name" value="Ribosomal_L11"/>
    <property type="match status" value="1"/>
</dbReference>
<dbReference type="Pfam" id="PF03946">
    <property type="entry name" value="Ribosomal_L11_N"/>
    <property type="match status" value="1"/>
</dbReference>
<dbReference type="SMART" id="SM00649">
    <property type="entry name" value="RL11"/>
    <property type="match status" value="1"/>
</dbReference>
<dbReference type="SUPFAM" id="SSF54747">
    <property type="entry name" value="Ribosomal L11/L12e N-terminal domain"/>
    <property type="match status" value="1"/>
</dbReference>
<dbReference type="SUPFAM" id="SSF46906">
    <property type="entry name" value="Ribosomal protein L11, C-terminal domain"/>
    <property type="match status" value="1"/>
</dbReference>
<dbReference type="PROSITE" id="PS00359">
    <property type="entry name" value="RIBOSOMAL_L11"/>
    <property type="match status" value="1"/>
</dbReference>
<comment type="function">
    <text evidence="1">Forms part of the ribosomal stalk which helps the ribosome interact with GTP-bound translation factors.</text>
</comment>
<comment type="subunit">
    <text evidence="1">Part of the ribosomal stalk of the 50S ribosomal subunit. Interacts with L10 and the large rRNA to form the base of the stalk. L10 forms an elongated spine to which L12 dimers bind in a sequential fashion forming a multimeric L10(L12)X complex.</text>
</comment>
<comment type="PTM">
    <text evidence="1">One or more lysine residues are methylated.</text>
</comment>
<comment type="similarity">
    <text evidence="1">Belongs to the universal ribosomal protein uL11 family.</text>
</comment>
<sequence length="143" mass="14994">MAKKIIGFIKLQVPAGKANPSPPIGPALGQRGLNIMEFCKAFNAQTQGVEPGMPIPVVITAFADKSFTFVMKTPPATYLIKKHSGVTKGSPKPHTDKVGKLTRAQAEEIAKLKAPDLTAADLDAAVRTIAGSARSMGITVEGL</sequence>
<name>RL11_JANMA</name>
<accession>A6T3L7</accession>
<evidence type="ECO:0000255" key="1">
    <source>
        <dbReference type="HAMAP-Rule" id="MF_00736"/>
    </source>
</evidence>
<evidence type="ECO:0000305" key="2"/>
<proteinExistence type="inferred from homology"/>
<keyword id="KW-0488">Methylation</keyword>
<keyword id="KW-0687">Ribonucleoprotein</keyword>
<keyword id="KW-0689">Ribosomal protein</keyword>
<keyword id="KW-0694">RNA-binding</keyword>
<keyword id="KW-0699">rRNA-binding</keyword>
<organism>
    <name type="scientific">Janthinobacterium sp. (strain Marseille)</name>
    <name type="common">Minibacterium massiliensis</name>
    <dbReference type="NCBI Taxonomy" id="375286"/>
    <lineage>
        <taxon>Bacteria</taxon>
        <taxon>Pseudomonadati</taxon>
        <taxon>Pseudomonadota</taxon>
        <taxon>Betaproteobacteria</taxon>
        <taxon>Burkholderiales</taxon>
        <taxon>Oxalobacteraceae</taxon>
        <taxon>Janthinobacterium</taxon>
    </lineage>
</organism>